<gene>
    <name evidence="1" type="primary">aspS</name>
    <name type="ordered locus">SG1257</name>
</gene>
<dbReference type="EC" id="6.1.1.12" evidence="1"/>
<dbReference type="EMBL" id="AP008232">
    <property type="protein sequence ID" value="BAE74532.1"/>
    <property type="molecule type" value="Genomic_DNA"/>
</dbReference>
<dbReference type="RefSeq" id="WP_011411086.1">
    <property type="nucleotide sequence ID" value="NC_007712.1"/>
</dbReference>
<dbReference type="SMR" id="Q2NTJ3"/>
<dbReference type="STRING" id="343509.SG1257"/>
<dbReference type="KEGG" id="sgl:SG1257"/>
<dbReference type="eggNOG" id="COG0173">
    <property type="taxonomic scope" value="Bacteria"/>
</dbReference>
<dbReference type="HOGENOM" id="CLU_014330_3_2_6"/>
<dbReference type="OrthoDB" id="9802326at2"/>
<dbReference type="BioCyc" id="SGLO343509:SGP1_RS11205-MONOMER"/>
<dbReference type="Proteomes" id="UP000001932">
    <property type="component" value="Chromosome"/>
</dbReference>
<dbReference type="GO" id="GO:0005737">
    <property type="term" value="C:cytoplasm"/>
    <property type="evidence" value="ECO:0007669"/>
    <property type="project" value="UniProtKB-SubCell"/>
</dbReference>
<dbReference type="GO" id="GO:0004815">
    <property type="term" value="F:aspartate-tRNA ligase activity"/>
    <property type="evidence" value="ECO:0007669"/>
    <property type="project" value="UniProtKB-UniRule"/>
</dbReference>
<dbReference type="GO" id="GO:0005524">
    <property type="term" value="F:ATP binding"/>
    <property type="evidence" value="ECO:0007669"/>
    <property type="project" value="UniProtKB-UniRule"/>
</dbReference>
<dbReference type="GO" id="GO:0003676">
    <property type="term" value="F:nucleic acid binding"/>
    <property type="evidence" value="ECO:0007669"/>
    <property type="project" value="InterPro"/>
</dbReference>
<dbReference type="GO" id="GO:0006422">
    <property type="term" value="P:aspartyl-tRNA aminoacylation"/>
    <property type="evidence" value="ECO:0007669"/>
    <property type="project" value="UniProtKB-UniRule"/>
</dbReference>
<dbReference type="CDD" id="cd00777">
    <property type="entry name" value="AspRS_core"/>
    <property type="match status" value="1"/>
</dbReference>
<dbReference type="CDD" id="cd04317">
    <property type="entry name" value="EcAspRS_like_N"/>
    <property type="match status" value="1"/>
</dbReference>
<dbReference type="FunFam" id="2.40.50.140:FF:000080">
    <property type="entry name" value="Aspartate--tRNA ligase"/>
    <property type="match status" value="1"/>
</dbReference>
<dbReference type="Gene3D" id="3.30.930.10">
    <property type="entry name" value="Bira Bifunctional Protein, Domain 2"/>
    <property type="match status" value="1"/>
</dbReference>
<dbReference type="Gene3D" id="3.30.1360.30">
    <property type="entry name" value="GAD-like domain"/>
    <property type="match status" value="1"/>
</dbReference>
<dbReference type="Gene3D" id="2.40.50.140">
    <property type="entry name" value="Nucleic acid-binding proteins"/>
    <property type="match status" value="1"/>
</dbReference>
<dbReference type="HAMAP" id="MF_00044">
    <property type="entry name" value="Asp_tRNA_synth_type1"/>
    <property type="match status" value="1"/>
</dbReference>
<dbReference type="InterPro" id="IPR004364">
    <property type="entry name" value="Aa-tRNA-synt_II"/>
</dbReference>
<dbReference type="InterPro" id="IPR006195">
    <property type="entry name" value="aa-tRNA-synth_II"/>
</dbReference>
<dbReference type="InterPro" id="IPR045864">
    <property type="entry name" value="aa-tRNA-synth_II/BPL/LPL"/>
</dbReference>
<dbReference type="InterPro" id="IPR004524">
    <property type="entry name" value="Asp-tRNA-ligase_1"/>
</dbReference>
<dbReference type="InterPro" id="IPR047089">
    <property type="entry name" value="Asp-tRNA-ligase_1_N"/>
</dbReference>
<dbReference type="InterPro" id="IPR002312">
    <property type="entry name" value="Asp/Asn-tRNA-synth_IIb"/>
</dbReference>
<dbReference type="InterPro" id="IPR047090">
    <property type="entry name" value="AspRS_core"/>
</dbReference>
<dbReference type="InterPro" id="IPR004115">
    <property type="entry name" value="GAD-like_sf"/>
</dbReference>
<dbReference type="InterPro" id="IPR029351">
    <property type="entry name" value="GAD_dom"/>
</dbReference>
<dbReference type="InterPro" id="IPR012340">
    <property type="entry name" value="NA-bd_OB-fold"/>
</dbReference>
<dbReference type="InterPro" id="IPR004365">
    <property type="entry name" value="NA-bd_OB_tRNA"/>
</dbReference>
<dbReference type="NCBIfam" id="TIGR00459">
    <property type="entry name" value="aspS_bact"/>
    <property type="match status" value="1"/>
</dbReference>
<dbReference type="NCBIfam" id="NF001750">
    <property type="entry name" value="PRK00476.1"/>
    <property type="match status" value="1"/>
</dbReference>
<dbReference type="PANTHER" id="PTHR22594:SF5">
    <property type="entry name" value="ASPARTATE--TRNA LIGASE, MITOCHONDRIAL"/>
    <property type="match status" value="1"/>
</dbReference>
<dbReference type="PANTHER" id="PTHR22594">
    <property type="entry name" value="ASPARTYL/LYSYL-TRNA SYNTHETASE"/>
    <property type="match status" value="1"/>
</dbReference>
<dbReference type="Pfam" id="PF02938">
    <property type="entry name" value="GAD"/>
    <property type="match status" value="1"/>
</dbReference>
<dbReference type="Pfam" id="PF00152">
    <property type="entry name" value="tRNA-synt_2"/>
    <property type="match status" value="1"/>
</dbReference>
<dbReference type="Pfam" id="PF01336">
    <property type="entry name" value="tRNA_anti-codon"/>
    <property type="match status" value="1"/>
</dbReference>
<dbReference type="PRINTS" id="PR01042">
    <property type="entry name" value="TRNASYNTHASP"/>
</dbReference>
<dbReference type="SUPFAM" id="SSF55681">
    <property type="entry name" value="Class II aaRS and biotin synthetases"/>
    <property type="match status" value="1"/>
</dbReference>
<dbReference type="SUPFAM" id="SSF55261">
    <property type="entry name" value="GAD domain-like"/>
    <property type="match status" value="1"/>
</dbReference>
<dbReference type="SUPFAM" id="SSF50249">
    <property type="entry name" value="Nucleic acid-binding proteins"/>
    <property type="match status" value="1"/>
</dbReference>
<dbReference type="PROSITE" id="PS50862">
    <property type="entry name" value="AA_TRNA_LIGASE_II"/>
    <property type="match status" value="1"/>
</dbReference>
<sequence length="596" mass="66488">MRTVYCGQLNLSHVGQEVMLCGWVNRRRDLGGLIFIDMRDREGLVQVFFDPDRQDAFARAAELRNEFCLQLTGIVRARPDSQVNSEMATGAVEVLATELSIINCSEPLPLDSNQNNTEEQRLKFRYLDLRRPVMAQRLKTRARISSFVRRFMDAEGFLDIETPMLTKATPEGARDYLVPSRVHKGKFYALPQSPQLFKQLLMMSGFDRYYQIVKCFRDEDLRADRQPEFTQIDVETSFMTATQVREVMERLIRDLWREITGVDLGIFPQMTYADAMRRFGSDKPDLRNPMELVDVADLVKDVQFKVFSIPANDSQGRVAALRVPGGAQLSRKQIDEYGKYSEIYGAKGLAWMKVNQRAAGVEGVQSPVAKFLGPQVIEQILVRTGAADSDIIFFSADRKNVVTDALGALRLKLGLDLQLTVTDRWAPLWVVDFPMFEEDGEGGLAAMHHPFTAPKDVDAQMLAASPTSAVANAYDMVINGYEVGGGSVRIHRGDMQQTVFGILAINEQEQQEKFGFLLDALKYGTPPHAGLAFGLDRLVMLLTGTDNIRDVIAFPKTTAAADLMTEAPSFGNADALADLSIAVVGKGREAMENGRS</sequence>
<comment type="function">
    <text evidence="1">Catalyzes the attachment of L-aspartate to tRNA(Asp) in a two-step reaction: L-aspartate is first activated by ATP to form Asp-AMP and then transferred to the acceptor end of tRNA(Asp).</text>
</comment>
<comment type="catalytic activity">
    <reaction evidence="1">
        <text>tRNA(Asp) + L-aspartate + ATP = L-aspartyl-tRNA(Asp) + AMP + diphosphate</text>
        <dbReference type="Rhea" id="RHEA:19649"/>
        <dbReference type="Rhea" id="RHEA-COMP:9660"/>
        <dbReference type="Rhea" id="RHEA-COMP:9678"/>
        <dbReference type="ChEBI" id="CHEBI:29991"/>
        <dbReference type="ChEBI" id="CHEBI:30616"/>
        <dbReference type="ChEBI" id="CHEBI:33019"/>
        <dbReference type="ChEBI" id="CHEBI:78442"/>
        <dbReference type="ChEBI" id="CHEBI:78516"/>
        <dbReference type="ChEBI" id="CHEBI:456215"/>
        <dbReference type="EC" id="6.1.1.12"/>
    </reaction>
</comment>
<comment type="subunit">
    <text evidence="1">Homodimer.</text>
</comment>
<comment type="subcellular location">
    <subcellularLocation>
        <location evidence="1">Cytoplasm</location>
    </subcellularLocation>
</comment>
<comment type="similarity">
    <text evidence="1">Belongs to the class-II aminoacyl-tRNA synthetase family. Type 1 subfamily.</text>
</comment>
<reference key="1">
    <citation type="journal article" date="2006" name="Genome Res.">
        <title>Massive genome erosion and functional adaptations provide insights into the symbiotic lifestyle of Sodalis glossinidius in the tsetse host.</title>
        <authorList>
            <person name="Toh H."/>
            <person name="Weiss B.L."/>
            <person name="Perkin S.A.H."/>
            <person name="Yamashita A."/>
            <person name="Oshima K."/>
            <person name="Hattori M."/>
            <person name="Aksoy S."/>
        </authorList>
    </citation>
    <scope>NUCLEOTIDE SEQUENCE [LARGE SCALE GENOMIC DNA]</scope>
    <source>
        <strain>morsitans</strain>
    </source>
</reference>
<organism>
    <name type="scientific">Sodalis glossinidius (strain morsitans)</name>
    <dbReference type="NCBI Taxonomy" id="343509"/>
    <lineage>
        <taxon>Bacteria</taxon>
        <taxon>Pseudomonadati</taxon>
        <taxon>Pseudomonadota</taxon>
        <taxon>Gammaproteobacteria</taxon>
        <taxon>Enterobacterales</taxon>
        <taxon>Bruguierivoracaceae</taxon>
        <taxon>Sodalis</taxon>
    </lineage>
</organism>
<accession>Q2NTJ3</accession>
<proteinExistence type="inferred from homology"/>
<feature type="chain" id="PRO_0000235559" description="Aspartate--tRNA ligase">
    <location>
        <begin position="1"/>
        <end position="596"/>
    </location>
</feature>
<feature type="region of interest" description="Aspartate" evidence="1">
    <location>
        <begin position="195"/>
        <end position="198"/>
    </location>
</feature>
<feature type="binding site" evidence="1">
    <location>
        <position position="171"/>
    </location>
    <ligand>
        <name>L-aspartate</name>
        <dbReference type="ChEBI" id="CHEBI:29991"/>
    </ligand>
</feature>
<feature type="binding site" evidence="1">
    <location>
        <begin position="217"/>
        <end position="219"/>
    </location>
    <ligand>
        <name>ATP</name>
        <dbReference type="ChEBI" id="CHEBI:30616"/>
    </ligand>
</feature>
<feature type="binding site" evidence="1">
    <location>
        <position position="217"/>
    </location>
    <ligand>
        <name>L-aspartate</name>
        <dbReference type="ChEBI" id="CHEBI:29991"/>
    </ligand>
</feature>
<feature type="binding site" evidence="1">
    <location>
        <position position="226"/>
    </location>
    <ligand>
        <name>ATP</name>
        <dbReference type="ChEBI" id="CHEBI:30616"/>
    </ligand>
</feature>
<feature type="binding site" evidence="1">
    <location>
        <position position="448"/>
    </location>
    <ligand>
        <name>L-aspartate</name>
        <dbReference type="ChEBI" id="CHEBI:29991"/>
    </ligand>
</feature>
<feature type="binding site" evidence="1">
    <location>
        <position position="482"/>
    </location>
    <ligand>
        <name>ATP</name>
        <dbReference type="ChEBI" id="CHEBI:30616"/>
    </ligand>
</feature>
<feature type="binding site" evidence="1">
    <location>
        <position position="489"/>
    </location>
    <ligand>
        <name>L-aspartate</name>
        <dbReference type="ChEBI" id="CHEBI:29991"/>
    </ligand>
</feature>
<feature type="binding site" evidence="1">
    <location>
        <begin position="534"/>
        <end position="537"/>
    </location>
    <ligand>
        <name>ATP</name>
        <dbReference type="ChEBI" id="CHEBI:30616"/>
    </ligand>
</feature>
<protein>
    <recommendedName>
        <fullName evidence="1">Aspartate--tRNA ligase</fullName>
        <ecNumber evidence="1">6.1.1.12</ecNumber>
    </recommendedName>
    <alternativeName>
        <fullName evidence="1">Aspartyl-tRNA synthetase</fullName>
        <shortName evidence="1">AspRS</shortName>
    </alternativeName>
</protein>
<keyword id="KW-0030">Aminoacyl-tRNA synthetase</keyword>
<keyword id="KW-0067">ATP-binding</keyword>
<keyword id="KW-0963">Cytoplasm</keyword>
<keyword id="KW-0436">Ligase</keyword>
<keyword id="KW-0547">Nucleotide-binding</keyword>
<keyword id="KW-0648">Protein biosynthesis</keyword>
<evidence type="ECO:0000255" key="1">
    <source>
        <dbReference type="HAMAP-Rule" id="MF_00044"/>
    </source>
</evidence>
<name>SYD_SODGM</name>